<protein>
    <recommendedName>
        <fullName>D(1A) dopamine receptor</fullName>
    </recommendedName>
    <alternativeName>
        <fullName>Dopamine D1 receptor</fullName>
    </alternativeName>
</protein>
<dbReference type="EMBL" id="Y10662">
    <property type="protein sequence ID" value="CAA71671.1"/>
    <property type="molecule type" value="Genomic_DNA"/>
</dbReference>
<dbReference type="STRING" id="9986.ENSOCUP00000004170"/>
<dbReference type="GlyCosmos" id="O02664">
    <property type="glycosylation" value="1 site, No reported glycans"/>
</dbReference>
<dbReference type="PaxDb" id="9986-ENSOCUP00000004170"/>
<dbReference type="eggNOG" id="KOG3656">
    <property type="taxonomic scope" value="Eukaryota"/>
</dbReference>
<dbReference type="InParanoid" id="O02664"/>
<dbReference type="Proteomes" id="UP000001811">
    <property type="component" value="Unplaced"/>
</dbReference>
<dbReference type="GO" id="GO:0060170">
    <property type="term" value="C:ciliary membrane"/>
    <property type="evidence" value="ECO:0007669"/>
    <property type="project" value="UniProtKB-SubCell"/>
</dbReference>
<dbReference type="GO" id="GO:0043197">
    <property type="term" value="C:dendritic spine"/>
    <property type="evidence" value="ECO:0000250"/>
    <property type="project" value="UniProtKB"/>
</dbReference>
<dbReference type="GO" id="GO:0005789">
    <property type="term" value="C:endoplasmic reticulum membrane"/>
    <property type="evidence" value="ECO:0007669"/>
    <property type="project" value="UniProtKB-SubCell"/>
</dbReference>
<dbReference type="GO" id="GO:0001588">
    <property type="term" value="F:dopamine neurotransmitter receptor activity, coupled via Gs"/>
    <property type="evidence" value="ECO:0007669"/>
    <property type="project" value="TreeGrafter"/>
</dbReference>
<dbReference type="GO" id="GO:0004930">
    <property type="term" value="F:G protein-coupled receptor activity"/>
    <property type="evidence" value="ECO:0007669"/>
    <property type="project" value="UniProtKB-KW"/>
</dbReference>
<dbReference type="GO" id="GO:0071880">
    <property type="term" value="P:adenylate cyclase-activating adrenergic receptor signaling pathway"/>
    <property type="evidence" value="ECO:0007669"/>
    <property type="project" value="TreeGrafter"/>
</dbReference>
<dbReference type="GO" id="GO:0043410">
    <property type="term" value="P:positive regulation of MAPK cascade"/>
    <property type="evidence" value="ECO:0007669"/>
    <property type="project" value="TreeGrafter"/>
</dbReference>
<dbReference type="Gene3D" id="1.20.1070.10">
    <property type="entry name" value="Rhodopsin 7-helix transmembrane proteins"/>
    <property type="match status" value="1"/>
</dbReference>
<dbReference type="InterPro" id="IPR000929">
    <property type="entry name" value="Dopamine_rcpt"/>
</dbReference>
<dbReference type="InterPro" id="IPR000276">
    <property type="entry name" value="GPCR_Rhodpsn"/>
</dbReference>
<dbReference type="InterPro" id="IPR017452">
    <property type="entry name" value="GPCR_Rhodpsn_7TM"/>
</dbReference>
<dbReference type="PANTHER" id="PTHR24248">
    <property type="entry name" value="ADRENERGIC RECEPTOR-RELATED G-PROTEIN COUPLED RECEPTOR"/>
    <property type="match status" value="1"/>
</dbReference>
<dbReference type="PANTHER" id="PTHR24248:SF139">
    <property type="entry name" value="D(1A) DOPAMINE RECEPTOR"/>
    <property type="match status" value="1"/>
</dbReference>
<dbReference type="Pfam" id="PF00001">
    <property type="entry name" value="7tm_1"/>
    <property type="match status" value="1"/>
</dbReference>
<dbReference type="PRINTS" id="PR00242">
    <property type="entry name" value="DOPAMINER"/>
</dbReference>
<dbReference type="PRINTS" id="PR00237">
    <property type="entry name" value="GPCRRHODOPSN"/>
</dbReference>
<dbReference type="SUPFAM" id="SSF81321">
    <property type="entry name" value="Family A G protein-coupled receptor-like"/>
    <property type="match status" value="1"/>
</dbReference>
<dbReference type="PROSITE" id="PS00237">
    <property type="entry name" value="G_PROTEIN_RECEP_F1_1"/>
    <property type="match status" value="1"/>
</dbReference>
<dbReference type="PROSITE" id="PS50262">
    <property type="entry name" value="G_PROTEIN_RECEP_F1_2"/>
    <property type="match status" value="1"/>
</dbReference>
<comment type="function">
    <text>Dopamine receptor whose activity is mediated by G proteins which activate adenylyl cyclase.</text>
</comment>
<comment type="subunit">
    <text evidence="2 4">Interacts with DNAJC14 via its C-terminus (By similarity). Interacts with DRD2 (By similarity). Interacts with DORIP1 (By similarity).</text>
</comment>
<comment type="subcellular location">
    <subcellularLocation>
        <location evidence="1">Cell membrane</location>
        <topology evidence="1">Multi-pass membrane protein</topology>
    </subcellularLocation>
    <subcellularLocation>
        <location evidence="1">Endoplasmic reticulum membrane</location>
        <topology evidence="1">Multi-pass membrane protein</topology>
    </subcellularLocation>
    <subcellularLocation>
        <location evidence="3">Cell projection</location>
        <location evidence="3">Cilium membrane</location>
        <topology evidence="5">Multi-pass membrane protein</topology>
    </subcellularLocation>
    <text evidence="1">Transport from the endoplasmic reticulum to the cell surface is regulated by interaction with DNAJC14.</text>
</comment>
<comment type="similarity">
    <text evidence="6">Belongs to the G-protein coupled receptor 1 family.</text>
</comment>
<name>DRD1_RABIT</name>
<feature type="chain" id="PRO_0000069377" description="D(1A) dopamine receptor">
    <location>
        <begin position="1" status="less than"/>
        <end position="180" status="greater than"/>
    </location>
</feature>
<feature type="transmembrane region" description="Helical; Name=1" evidence="5">
    <location>
        <begin position="1" status="less than"/>
        <end position="10"/>
    </location>
</feature>
<feature type="topological domain" description="Cytoplasmic" evidence="5">
    <location>
        <begin position="11"/>
        <end position="21"/>
    </location>
</feature>
<feature type="transmembrane region" description="Helical; Name=2" evidence="5">
    <location>
        <begin position="22"/>
        <end position="48"/>
    </location>
</feature>
<feature type="topological domain" description="Extracellular" evidence="5">
    <location>
        <begin position="49"/>
        <end position="57"/>
    </location>
</feature>
<feature type="transmembrane region" description="Helical; Name=3" evidence="5">
    <location>
        <begin position="58"/>
        <end position="80"/>
    </location>
</feature>
<feature type="topological domain" description="Cytoplasmic" evidence="5">
    <location>
        <begin position="81"/>
        <end position="99"/>
    </location>
</feature>
<feature type="transmembrane region" description="Helical; Name=4" evidence="5">
    <location>
        <begin position="100"/>
        <end position="124"/>
    </location>
</feature>
<feature type="topological domain" description="Extracellular" evidence="5">
    <location>
        <begin position="125"/>
        <end position="153"/>
    </location>
</feature>
<feature type="transmembrane region" description="Helical; Name=5" evidence="5">
    <location>
        <begin position="154"/>
        <end position="179"/>
    </location>
</feature>
<feature type="topological domain" description="Cytoplasmic" evidence="5">
    <location>
        <begin position="180"/>
        <end position="180" status="greater than"/>
    </location>
</feature>
<feature type="glycosylation site" description="N-linked (GlcNAc...) asparagine" evidence="5">
    <location>
        <position position="136"/>
    </location>
</feature>
<feature type="disulfide bond" evidence="6">
    <location>
        <begin position="57"/>
        <end position="147"/>
    </location>
</feature>
<feature type="non-terminal residue">
    <location>
        <position position="1"/>
    </location>
</feature>
<feature type="non-terminal residue">
    <location>
        <position position="180"/>
    </location>
</feature>
<accession>O02664</accession>
<keyword id="KW-1003">Cell membrane</keyword>
<keyword id="KW-0966">Cell projection</keyword>
<keyword id="KW-1015">Disulfide bond</keyword>
<keyword id="KW-0256">Endoplasmic reticulum</keyword>
<keyword id="KW-0297">G-protein coupled receptor</keyword>
<keyword id="KW-0325">Glycoprotein</keyword>
<keyword id="KW-0449">Lipoprotein</keyword>
<keyword id="KW-0472">Membrane</keyword>
<keyword id="KW-0564">Palmitate</keyword>
<keyword id="KW-0675">Receptor</keyword>
<keyword id="KW-1185">Reference proteome</keyword>
<keyword id="KW-0807">Transducer</keyword>
<keyword id="KW-0812">Transmembrane</keyword>
<keyword id="KW-1133">Transmembrane helix</keyword>
<gene>
    <name type="primary">DRD1</name>
</gene>
<organism>
    <name type="scientific">Oryctolagus cuniculus</name>
    <name type="common">Rabbit</name>
    <dbReference type="NCBI Taxonomy" id="9986"/>
    <lineage>
        <taxon>Eukaryota</taxon>
        <taxon>Metazoa</taxon>
        <taxon>Chordata</taxon>
        <taxon>Craniata</taxon>
        <taxon>Vertebrata</taxon>
        <taxon>Euteleostomi</taxon>
        <taxon>Mammalia</taxon>
        <taxon>Eutheria</taxon>
        <taxon>Euarchontoglires</taxon>
        <taxon>Glires</taxon>
        <taxon>Lagomorpha</taxon>
        <taxon>Leporidae</taxon>
        <taxon>Oryctolagus</taxon>
    </lineage>
</organism>
<proteinExistence type="inferred from homology"/>
<evidence type="ECO:0000250" key="1"/>
<evidence type="ECO:0000250" key="2">
    <source>
        <dbReference type="UniProtKB" id="P18901"/>
    </source>
</evidence>
<evidence type="ECO:0000250" key="3">
    <source>
        <dbReference type="UniProtKB" id="P21728"/>
    </source>
</evidence>
<evidence type="ECO:0000250" key="4">
    <source>
        <dbReference type="UniProtKB" id="Q61616"/>
    </source>
</evidence>
<evidence type="ECO:0000255" key="5"/>
<evidence type="ECO:0000255" key="6">
    <source>
        <dbReference type="PROSITE-ProRule" id="PRU00521"/>
    </source>
</evidence>
<reference key="1">
    <citation type="journal article" date="1998" name="Neurosci. Res.">
        <title>Expression of dopamine D1-receptor mRNA in the carotid body of adult rabbits, cats and rats.</title>
        <authorList>
            <person name="Bairam A."/>
            <person name="Frenette J."/>
            <person name="Dauphin C."/>
            <person name="Carroll J.L."/>
            <person name="Khandjian E.W."/>
        </authorList>
    </citation>
    <scope>NUCLEOTIDE SEQUENCE [GENOMIC DNA]</scope>
    <source>
        <strain>New Zealand</strain>
    </source>
</reference>
<sequence>NTLLVCAAVIRFRHLRSKVTNFFVISLAVSDLLVAVLVMPWKAVAEIAGFWPFGSFCNIWVAFDIMCSTASILNLCVISVDRYWAISSPFRYERKMTPKAAFILIGVAWTLSVLISFIPVQLSWHKAKPTSPPDGNATSLDETVDNCDSSLSRTYSISSSLVNFYNPVAIMXVTYTRIHR</sequence>